<proteinExistence type="inferred from homology"/>
<accession>Q751P7</accession>
<sequence>MMFLEMQRAFMLHGRRAVTRSAVGVRYISEDIQQKDAQAGEKATATATGVIYKSDEETLMYFDNVYPRATSLWRPTQWYNILLSNQSREAVREKIMRLASPASNPVHGLELRSTIPIKRDGGVFATFRVPREYTRAQVNALIQANTQQESSKSLLAAFTRAAAFPVKGVPWIEDLKRLPNNVVRVEVEGPALSEEELYSLFRRYGTILDIYPAGKNGYATIRYRSFRGAICAKNCVSGIEINGSTLHVKFEPVVRAHAIRDFFVNHPRIAIPLLIALLSICAVLIFDPIREFSIEQKITRMYTLSRDNFVVKSILRLTSYTVSSVKHLWGYDDDQPEKRQLWQERVEKVNDLKMWLEENNNTFVVVTGPRGSGKHELVMQHTLHDRPNVLYLDCDTLIKSRTDSKFLRNAAHQIGYFPIFPWLNSVTTLVDLAVQGLTGQKSGLSESKETQFRNMLNTAMMSIRHIALSGYKATLHSGDDVTTVKEEDYLQQHPERKPVIVIDRFSNKAEINGFVYKELADWASMLVQMNIAHVIFLTESVSPNQLLAEALPNQVFKFLFLSDASKDSARSYVLSQLYPSSPAYSEKMPAADADANEEYRKEIDRALEPIGGRMLDLQAFVRRVKSGEEPSEALEKMVEQASEQITQIFLSERSEPIKTAQAWELIELLSQNDVVKYGDIVFRPLFKSSPEAGLLELEKNGLITISRNRGVLQDIRPAKPLFKAAFSYLLQDKDLSIVLRTGYYLRLIAFETGRIKKWEEELRLLAKVSDQRICKSRLNYLASKIDASSGVINSCEDKVKEMSKRI</sequence>
<keyword id="KW-0472">Membrane</keyword>
<keyword id="KW-0496">Mitochondrion</keyword>
<keyword id="KW-0999">Mitochondrion inner membrane</keyword>
<keyword id="KW-0507">mRNA processing</keyword>
<keyword id="KW-1185">Reference proteome</keyword>
<keyword id="KW-0694">RNA-binding</keyword>
<keyword id="KW-0809">Transit peptide</keyword>
<keyword id="KW-0812">Transmembrane</keyword>
<keyword id="KW-1133">Transmembrane helix</keyword>
<feature type="transit peptide" description="Mitochondrion" evidence="2">
    <location>
        <begin position="1"/>
        <end position="25"/>
    </location>
</feature>
<feature type="chain" id="PRO_0000343111" description="Mitochondrial escape protein 2">
    <location>
        <begin position="26"/>
        <end position="806"/>
    </location>
</feature>
<feature type="topological domain" description="Mitochondrial matrix" evidence="2">
    <location>
        <begin position="26"/>
        <end position="268"/>
    </location>
</feature>
<feature type="transmembrane region" description="Helical" evidence="2">
    <location>
        <begin position="269"/>
        <end position="289"/>
    </location>
</feature>
<feature type="topological domain" description="Mitochondrial intermembrane" evidence="2">
    <location>
        <begin position="290"/>
        <end position="806"/>
    </location>
</feature>
<feature type="domain" description="RRM" evidence="3">
    <location>
        <begin position="181"/>
        <end position="253"/>
    </location>
</feature>
<gene>
    <name type="primary">YME2</name>
    <name type="ordered locus">AGL358C</name>
</gene>
<reference key="1">
    <citation type="journal article" date="2004" name="Science">
        <title>The Ashbya gossypii genome as a tool for mapping the ancient Saccharomyces cerevisiae genome.</title>
        <authorList>
            <person name="Dietrich F.S."/>
            <person name="Voegeli S."/>
            <person name="Brachat S."/>
            <person name="Lerch A."/>
            <person name="Gates K."/>
            <person name="Steiner S."/>
            <person name="Mohr C."/>
            <person name="Poehlmann R."/>
            <person name="Luedi P."/>
            <person name="Choi S."/>
            <person name="Wing R.A."/>
            <person name="Flavier A."/>
            <person name="Gaffney T.D."/>
            <person name="Philippsen P."/>
        </authorList>
    </citation>
    <scope>NUCLEOTIDE SEQUENCE [LARGE SCALE GENOMIC DNA]</scope>
    <source>
        <strain>ATCC 10895 / CBS 109.51 / FGSC 9923 / NRRL Y-1056</strain>
    </source>
</reference>
<reference key="2">
    <citation type="journal article" date="2013" name="G3 (Bethesda)">
        <title>Genomes of Ashbya fungi isolated from insects reveal four mating-type loci, numerous translocations, lack of transposons, and distinct gene duplications.</title>
        <authorList>
            <person name="Dietrich F.S."/>
            <person name="Voegeli S."/>
            <person name="Kuo S."/>
            <person name="Philippsen P."/>
        </authorList>
    </citation>
    <scope>GENOME REANNOTATION</scope>
    <source>
        <strain>ATCC 10895 / CBS 109.51 / FGSC 9923 / NRRL Y-1056</strain>
    </source>
</reference>
<comment type="function">
    <text evidence="1">Plays a role in maintaining the mitochondrial genome and in controlling the mtDNA escape. Involved in the regulation of mtDNA nucleotide structure and number. May have a dispensable role in early maturation of pre-rRNA (By similarity).</text>
</comment>
<comment type="subcellular location">
    <subcellularLocation>
        <location evidence="1">Mitochondrion inner membrane</location>
        <topology evidence="1">Single-pass membrane protein</topology>
    </subcellularLocation>
</comment>
<comment type="similarity">
    <text evidence="4">Belongs to the YME2 family.</text>
</comment>
<dbReference type="EMBL" id="AE016820">
    <property type="protein sequence ID" value="AAS54133.1"/>
    <property type="molecule type" value="Genomic_DNA"/>
</dbReference>
<dbReference type="RefSeq" id="NP_986309.1">
    <property type="nucleotide sequence ID" value="NM_211371.1"/>
</dbReference>
<dbReference type="FunCoup" id="Q751P7">
    <property type="interactions" value="165"/>
</dbReference>
<dbReference type="STRING" id="284811.Q751P7"/>
<dbReference type="EnsemblFungi" id="AAS54133">
    <property type="protein sequence ID" value="AAS54133"/>
    <property type="gene ID" value="AGOS_AGL358C"/>
</dbReference>
<dbReference type="GeneID" id="4622602"/>
<dbReference type="KEGG" id="ago:AGOS_AGL358C"/>
<dbReference type="eggNOG" id="ENOG502QS0P">
    <property type="taxonomic scope" value="Eukaryota"/>
</dbReference>
<dbReference type="HOGENOM" id="CLU_007861_1_0_1"/>
<dbReference type="InParanoid" id="Q751P7"/>
<dbReference type="OMA" id="FQFFRPY"/>
<dbReference type="OrthoDB" id="10267654at2759"/>
<dbReference type="Proteomes" id="UP000000591">
    <property type="component" value="Chromosome VII"/>
</dbReference>
<dbReference type="GO" id="GO:0005743">
    <property type="term" value="C:mitochondrial inner membrane"/>
    <property type="evidence" value="ECO:0000318"/>
    <property type="project" value="GO_Central"/>
</dbReference>
<dbReference type="GO" id="GO:0003723">
    <property type="term" value="F:RNA binding"/>
    <property type="evidence" value="ECO:0007669"/>
    <property type="project" value="UniProtKB-KW"/>
</dbReference>
<dbReference type="GO" id="GO:0000002">
    <property type="term" value="P:mitochondrial genome maintenance"/>
    <property type="evidence" value="ECO:0000318"/>
    <property type="project" value="GO_Central"/>
</dbReference>
<dbReference type="GO" id="GO:0006397">
    <property type="term" value="P:mRNA processing"/>
    <property type="evidence" value="ECO:0007669"/>
    <property type="project" value="UniProtKB-KW"/>
</dbReference>
<dbReference type="CDD" id="cd12433">
    <property type="entry name" value="RRM_Yme2p_like"/>
    <property type="match status" value="1"/>
</dbReference>
<dbReference type="Gene3D" id="3.30.70.330">
    <property type="match status" value="1"/>
</dbReference>
<dbReference type="Gene3D" id="3.40.50.300">
    <property type="entry name" value="P-loop containing nucleotide triphosphate hydrolases"/>
    <property type="match status" value="1"/>
</dbReference>
<dbReference type="InterPro" id="IPR018850">
    <property type="entry name" value="Mt_escape_2_C"/>
</dbReference>
<dbReference type="InterPro" id="IPR012677">
    <property type="entry name" value="Nucleotide-bd_a/b_plait_sf"/>
</dbReference>
<dbReference type="InterPro" id="IPR027417">
    <property type="entry name" value="P-loop_NTPase"/>
</dbReference>
<dbReference type="InterPro" id="IPR035979">
    <property type="entry name" value="RBD_domain_sf"/>
</dbReference>
<dbReference type="InterPro" id="IPR000504">
    <property type="entry name" value="RRM_dom"/>
</dbReference>
<dbReference type="InterPro" id="IPR039627">
    <property type="entry name" value="Yme2_C"/>
</dbReference>
<dbReference type="InterPro" id="IPR034260">
    <property type="entry name" value="Yme2_RRM"/>
</dbReference>
<dbReference type="PANTHER" id="PTHR32198">
    <property type="entry name" value="MITOCHONDRIAL ESCAPE PROTEIN 2"/>
    <property type="match status" value="1"/>
</dbReference>
<dbReference type="PANTHER" id="PTHR32198:SF2">
    <property type="entry name" value="MITOCHONDRIAL ESCAPE PROTEIN 2"/>
    <property type="match status" value="1"/>
</dbReference>
<dbReference type="Pfam" id="PF10443">
    <property type="entry name" value="RNA12"/>
    <property type="match status" value="1"/>
</dbReference>
<dbReference type="Pfam" id="PF00076">
    <property type="entry name" value="RRM_1"/>
    <property type="match status" value="1"/>
</dbReference>
<dbReference type="SUPFAM" id="SSF52540">
    <property type="entry name" value="P-loop containing nucleoside triphosphate hydrolases"/>
    <property type="match status" value="1"/>
</dbReference>
<dbReference type="SUPFAM" id="SSF54928">
    <property type="entry name" value="RNA-binding domain, RBD"/>
    <property type="match status" value="1"/>
</dbReference>
<dbReference type="PROSITE" id="PS50102">
    <property type="entry name" value="RRM"/>
    <property type="match status" value="1"/>
</dbReference>
<protein>
    <recommendedName>
        <fullName>Mitochondrial escape protein 2</fullName>
    </recommendedName>
</protein>
<evidence type="ECO:0000250" key="1"/>
<evidence type="ECO:0000255" key="2"/>
<evidence type="ECO:0000255" key="3">
    <source>
        <dbReference type="PROSITE-ProRule" id="PRU00176"/>
    </source>
</evidence>
<evidence type="ECO:0000305" key="4"/>
<name>YME2_EREGS</name>
<organism>
    <name type="scientific">Eremothecium gossypii (strain ATCC 10895 / CBS 109.51 / FGSC 9923 / NRRL Y-1056)</name>
    <name type="common">Yeast</name>
    <name type="synonym">Ashbya gossypii</name>
    <dbReference type="NCBI Taxonomy" id="284811"/>
    <lineage>
        <taxon>Eukaryota</taxon>
        <taxon>Fungi</taxon>
        <taxon>Dikarya</taxon>
        <taxon>Ascomycota</taxon>
        <taxon>Saccharomycotina</taxon>
        <taxon>Saccharomycetes</taxon>
        <taxon>Saccharomycetales</taxon>
        <taxon>Saccharomycetaceae</taxon>
        <taxon>Eremothecium</taxon>
    </lineage>
</organism>